<proteinExistence type="inferred from homology"/>
<organism>
    <name type="scientific">Syntrophotalea carbinolica (strain DSM 2380 / NBRC 103641 / GraBd1)</name>
    <name type="common">Pelobacter carbinolicus</name>
    <dbReference type="NCBI Taxonomy" id="338963"/>
    <lineage>
        <taxon>Bacteria</taxon>
        <taxon>Pseudomonadati</taxon>
        <taxon>Thermodesulfobacteriota</taxon>
        <taxon>Desulfuromonadia</taxon>
        <taxon>Desulfuromonadales</taxon>
        <taxon>Syntrophotaleaceae</taxon>
        <taxon>Syntrophotalea</taxon>
    </lineage>
</organism>
<gene>
    <name evidence="2" type="primary">trmB</name>
    <name type="ordered locus">Pcar_0761</name>
</gene>
<accession>Q3A6I7</accession>
<name>TRMB_SYNC1</name>
<keyword id="KW-0489">Methyltransferase</keyword>
<keyword id="KW-1185">Reference proteome</keyword>
<keyword id="KW-0949">S-adenosyl-L-methionine</keyword>
<keyword id="KW-0808">Transferase</keyword>
<keyword id="KW-0819">tRNA processing</keyword>
<protein>
    <recommendedName>
        <fullName evidence="2">tRNA (guanine-N(7)-)-methyltransferase</fullName>
        <ecNumber evidence="2">2.1.1.33</ecNumber>
    </recommendedName>
    <alternativeName>
        <fullName evidence="2">tRNA (guanine(46)-N(7))-methyltransferase</fullName>
    </alternativeName>
    <alternativeName>
        <fullName evidence="2">tRNA(m7G46)-methyltransferase</fullName>
    </alternativeName>
</protein>
<evidence type="ECO:0000250" key="1"/>
<evidence type="ECO:0000255" key="2">
    <source>
        <dbReference type="HAMAP-Rule" id="MF_01057"/>
    </source>
</evidence>
<dbReference type="EC" id="2.1.1.33" evidence="2"/>
<dbReference type="EMBL" id="CP000142">
    <property type="protein sequence ID" value="ABA88020.1"/>
    <property type="molecule type" value="Genomic_DNA"/>
</dbReference>
<dbReference type="RefSeq" id="WP_011340464.1">
    <property type="nucleotide sequence ID" value="NC_007498.2"/>
</dbReference>
<dbReference type="SMR" id="Q3A6I7"/>
<dbReference type="STRING" id="338963.Pcar_0761"/>
<dbReference type="KEGG" id="pca:Pcar_0761"/>
<dbReference type="eggNOG" id="COG0220">
    <property type="taxonomic scope" value="Bacteria"/>
</dbReference>
<dbReference type="HOGENOM" id="CLU_050910_2_0_7"/>
<dbReference type="OrthoDB" id="9802090at2"/>
<dbReference type="UniPathway" id="UPA00989"/>
<dbReference type="Proteomes" id="UP000002534">
    <property type="component" value="Chromosome"/>
</dbReference>
<dbReference type="GO" id="GO:0043527">
    <property type="term" value="C:tRNA methyltransferase complex"/>
    <property type="evidence" value="ECO:0007669"/>
    <property type="project" value="TreeGrafter"/>
</dbReference>
<dbReference type="GO" id="GO:0008176">
    <property type="term" value="F:tRNA (guanine(46)-N7)-methyltransferase activity"/>
    <property type="evidence" value="ECO:0007669"/>
    <property type="project" value="UniProtKB-UniRule"/>
</dbReference>
<dbReference type="CDD" id="cd02440">
    <property type="entry name" value="AdoMet_MTases"/>
    <property type="match status" value="1"/>
</dbReference>
<dbReference type="Gene3D" id="3.40.50.150">
    <property type="entry name" value="Vaccinia Virus protein VP39"/>
    <property type="match status" value="1"/>
</dbReference>
<dbReference type="HAMAP" id="MF_01057">
    <property type="entry name" value="tRNA_methyltr_TrmB"/>
    <property type="match status" value="1"/>
</dbReference>
<dbReference type="InterPro" id="IPR029063">
    <property type="entry name" value="SAM-dependent_MTases_sf"/>
</dbReference>
<dbReference type="InterPro" id="IPR003358">
    <property type="entry name" value="tRNA_(Gua-N-7)_MeTrfase_Trmb"/>
</dbReference>
<dbReference type="InterPro" id="IPR055361">
    <property type="entry name" value="tRNA_methyltr_TrmB_bact"/>
</dbReference>
<dbReference type="NCBIfam" id="TIGR00091">
    <property type="entry name" value="tRNA (guanosine(46)-N7)-methyltransferase TrmB"/>
    <property type="match status" value="1"/>
</dbReference>
<dbReference type="PANTHER" id="PTHR23417">
    <property type="entry name" value="3-DEOXY-D-MANNO-OCTULOSONIC-ACID TRANSFERASE/TRNA GUANINE-N 7 - -METHYLTRANSFERASE"/>
    <property type="match status" value="1"/>
</dbReference>
<dbReference type="PANTHER" id="PTHR23417:SF14">
    <property type="entry name" value="PENTACOTRIPEPTIDE-REPEAT REGION OF PRORP DOMAIN-CONTAINING PROTEIN"/>
    <property type="match status" value="1"/>
</dbReference>
<dbReference type="Pfam" id="PF02390">
    <property type="entry name" value="Methyltransf_4"/>
    <property type="match status" value="1"/>
</dbReference>
<dbReference type="SUPFAM" id="SSF53335">
    <property type="entry name" value="S-adenosyl-L-methionine-dependent methyltransferases"/>
    <property type="match status" value="1"/>
</dbReference>
<dbReference type="PROSITE" id="PS51625">
    <property type="entry name" value="SAM_MT_TRMB"/>
    <property type="match status" value="1"/>
</dbReference>
<feature type="chain" id="PRO_0000229181" description="tRNA (guanine-N(7)-)-methyltransferase">
    <location>
        <begin position="1"/>
        <end position="232"/>
    </location>
</feature>
<feature type="active site" evidence="1">
    <location>
        <position position="113"/>
    </location>
</feature>
<feature type="binding site" evidence="2">
    <location>
        <position position="38"/>
    </location>
    <ligand>
        <name>S-adenosyl-L-methionine</name>
        <dbReference type="ChEBI" id="CHEBI:59789"/>
    </ligand>
</feature>
<feature type="binding site" evidence="2">
    <location>
        <position position="63"/>
    </location>
    <ligand>
        <name>S-adenosyl-L-methionine</name>
        <dbReference type="ChEBI" id="CHEBI:59789"/>
    </ligand>
</feature>
<feature type="binding site" evidence="2">
    <location>
        <position position="90"/>
    </location>
    <ligand>
        <name>S-adenosyl-L-methionine</name>
        <dbReference type="ChEBI" id="CHEBI:59789"/>
    </ligand>
</feature>
<feature type="binding site" evidence="2">
    <location>
        <position position="113"/>
    </location>
    <ligand>
        <name>S-adenosyl-L-methionine</name>
        <dbReference type="ChEBI" id="CHEBI:59789"/>
    </ligand>
</feature>
<feature type="binding site" evidence="2">
    <location>
        <position position="117"/>
    </location>
    <ligand>
        <name>substrate</name>
    </ligand>
</feature>
<feature type="binding site" evidence="2">
    <location>
        <position position="149"/>
    </location>
    <ligand>
        <name>substrate</name>
    </ligand>
</feature>
<reference key="1">
    <citation type="submission" date="2005-10" db="EMBL/GenBank/DDBJ databases">
        <title>Complete sequence of Pelobacter carbinolicus DSM 2380.</title>
        <authorList>
            <person name="Copeland A."/>
            <person name="Lucas S."/>
            <person name="Lapidus A."/>
            <person name="Barry K."/>
            <person name="Detter J.C."/>
            <person name="Glavina T."/>
            <person name="Hammon N."/>
            <person name="Israni S."/>
            <person name="Pitluck S."/>
            <person name="Chertkov O."/>
            <person name="Schmutz J."/>
            <person name="Larimer F."/>
            <person name="Land M."/>
            <person name="Kyrpides N."/>
            <person name="Ivanova N."/>
            <person name="Richardson P."/>
        </authorList>
    </citation>
    <scope>NUCLEOTIDE SEQUENCE [LARGE SCALE GENOMIC DNA]</scope>
    <source>
        <strain>DSM 2380 / NBRC 103641 / GraBd1</strain>
    </source>
</reference>
<comment type="function">
    <text evidence="2">Catalyzes the formation of N(7)-methylguanine at position 46 (m7G46) in tRNA.</text>
</comment>
<comment type="catalytic activity">
    <reaction evidence="2">
        <text>guanosine(46) in tRNA + S-adenosyl-L-methionine = N(7)-methylguanosine(46) in tRNA + S-adenosyl-L-homocysteine</text>
        <dbReference type="Rhea" id="RHEA:42708"/>
        <dbReference type="Rhea" id="RHEA-COMP:10188"/>
        <dbReference type="Rhea" id="RHEA-COMP:10189"/>
        <dbReference type="ChEBI" id="CHEBI:57856"/>
        <dbReference type="ChEBI" id="CHEBI:59789"/>
        <dbReference type="ChEBI" id="CHEBI:74269"/>
        <dbReference type="ChEBI" id="CHEBI:74480"/>
        <dbReference type="EC" id="2.1.1.33"/>
    </reaction>
</comment>
<comment type="pathway">
    <text evidence="2">tRNA modification; N(7)-methylguanine-tRNA biosynthesis.</text>
</comment>
<comment type="similarity">
    <text evidence="2">Belongs to the class I-like SAM-binding methyltransferase superfamily. TrmB family.</text>
</comment>
<sequence length="232" mass="26466">MTQHMIEIKSPYFLREESLASPADFAAVFGNRNPLVLEIGCGIGDFVTQLASSAPERNYLAIDIYNKGCNKTCNRLEQARLTNVRVMRIEARYLLEQFLATESLAAVYINCPDPWPKKRHLKRRLVNERFLQTLLHYLQPGGELFFSSDVADYAHAVTAHLNQIKGYENRLPVPVALDMAGYPLSKYMRRFLAQGQSIHFIHHRRNPQHTCETAAPQPVHRGFRTAWSANNG</sequence>